<proteinExistence type="evidence at protein level"/>
<comment type="function">
    <text evidence="4 5">Transcriptionally controlled transcription factor. Important for the differentiation of various specialized cell types that arise from both endoderm and mesoderm. May have a role in early gut formation. Plays an essential role in lipid catabolism, regulating lipid mobilization and beta-oxidation in response to nutrient deprivation.</text>
</comment>
<comment type="subunit">
    <text evidence="5">Homodimer.</text>
</comment>
<comment type="subcellular location">
    <subcellularLocation>
        <location evidence="1 4">Nucleus</location>
    </subcellularLocation>
</comment>
<comment type="alternative products">
    <event type="alternative splicing"/>
    <isoform>
        <id>P49866-1</id>
        <name>A</name>
        <sequence type="displayed"/>
    </isoform>
    <isoform>
        <id>P49866-2</id>
        <name>D</name>
        <sequence type="described" ref="VSP_054577"/>
    </isoform>
    <isoform>
        <id>P49866-3</id>
        <name>B</name>
        <sequence type="described" ref="VSP_054578"/>
    </isoform>
</comment>
<comment type="tissue specificity">
    <text evidence="4 5">In third instar larvae, expressed at high levels in midgut and attached gastric caeca, fat body, Malpighian tubules and oenocytes, and at lower levels in proventriculus, salivary glands, epidermis, brain and ring gland. Not detected in imaginal disks and the median neurosecretory cells that produce insulin-like peptides (at protein level). In developing embryos, expressed in mid-gut, fat bodies and the distal region of Malpighian tubules.</text>
</comment>
<comment type="disruption phenotype">
    <text evidence="4">Under normal culture conditions, the flies progress through development until they die during or shortly after adult eclosion. Under low density culture conditions, many flies survive and develop into morphologically normal adults. The mutant flies are, however, very sensitive to starvation, displaying inability to efficiently mobilize stored lipid in the midgut and fat body, increased levels of long-chain fatty acids and triglycerides, and premature death.</text>
</comment>
<comment type="similarity">
    <text evidence="8">Belongs to the nuclear hormone receptor family. NR2 subfamily.</text>
</comment>
<comment type="sequence caution" evidence="8">
    <conflict type="erroneous initiation">
        <sequence resource="EMBL-CDS" id="AAB09592"/>
    </conflict>
    <text>Truncated N-terminus.</text>
</comment>
<comment type="sequence caution" evidence="8">
    <conflict type="erroneous initiation">
        <sequence resource="EMBL-CDS" id="AAN71555"/>
    </conflict>
    <text>Extended N-terminus.</text>
</comment>
<comment type="sequence caution" evidence="8">
    <conflict type="erroneous initiation">
        <sequence resource="EMBL-CDS" id="ACS68165"/>
    </conflict>
    <text>Extended N-terminus.</text>
</comment>
<sequence>MMKHPQDLSVTDDQQLMKVNKVEKMEQELHDPESESHIMHADALASAYPAASQPHSPIGLALSPNGGGLGLSNSSNQSSENFALCNGNGNAGSAGGGSASSGSNNNNSMFSPNNNLSGSGSGTNSSQQQLQQQQQQQSPTVCAICGDRATGKHYGASSCDGCKGFFRRSVRKNHQYTCRFARNCVVDKDKRNQCRYCRLRKCFKAGMKKEAVQNERDRISCRRTSNDDPDPGNGLSVISLVKAENESRQSKAGAAMEPNINEDLSNKQFASINDVCESMKQQLLTLVEWAKQIPAFNELQLDDQVALLRAHAGEHLLLGLSRRSMHLKDVLLLSNNCVITRHCPDPLVSPNLDISRIGARIIDELVTVMKDVGIDDTEFACIKALVFFDPNAKGLNEPHRIKSLRHQILNNLEDYISDRQYESRGRFGEILLILPVLQSITWQMIEQIQFAKIFGVAHIDSLLQEMLLGGELADNPLPLSPPNQSNDYQSPTHTGNMEGGNQVNSSLDSLATSGGPGSHSLDLEVQHIQALIEANSADDSFRAYAASTAAAAAAAVSSSSSAPASVAPASISPPLNSPKSQHQHQQHATHQQQQESSYLDMPVKHYNGSRSGPLPTQHSPQRMHPYQRAVASPVEVSSGGGGLGLRNPADITLNEYNRSEGSSAEELLRRTPLKIRAPEMLTAPAGYGTEPCRMTLKQEPETGY</sequence>
<organism>
    <name type="scientific">Drosophila melanogaster</name>
    <name type="common">Fruit fly</name>
    <dbReference type="NCBI Taxonomy" id="7227"/>
    <lineage>
        <taxon>Eukaryota</taxon>
        <taxon>Metazoa</taxon>
        <taxon>Ecdysozoa</taxon>
        <taxon>Arthropoda</taxon>
        <taxon>Hexapoda</taxon>
        <taxon>Insecta</taxon>
        <taxon>Pterygota</taxon>
        <taxon>Neoptera</taxon>
        <taxon>Endopterygota</taxon>
        <taxon>Diptera</taxon>
        <taxon>Brachycera</taxon>
        <taxon>Muscomorpha</taxon>
        <taxon>Ephydroidea</taxon>
        <taxon>Drosophilidae</taxon>
        <taxon>Drosophila</taxon>
        <taxon>Sophophora</taxon>
    </lineage>
</organism>
<reference key="1">
    <citation type="journal article" date="1993" name="EMBO J.">
        <title>The expression pattern of a Drosophila homolog to the mouse transcription factor HNF-4 suggests a determinative role in gut formation.</title>
        <authorList>
            <person name="Zhong W."/>
            <person name="Sladek F.M."/>
            <person name="Darnell J.E. Jr."/>
        </authorList>
    </citation>
    <scope>NUCLEOTIDE SEQUENCE [MRNA] (ISOFORM A)</scope>
    <scope>FUNCTION</scope>
    <scope>SUBUNIT</scope>
    <scope>TISSUE SPECIFICITY</scope>
    <source>
        <tissue>Ovary</tissue>
    </source>
</reference>
<reference key="2">
    <citation type="journal article" date="2000" name="Science">
        <title>The genome sequence of Drosophila melanogaster.</title>
        <authorList>
            <person name="Adams M.D."/>
            <person name="Celniker S.E."/>
            <person name="Holt R.A."/>
            <person name="Evans C.A."/>
            <person name="Gocayne J.D."/>
            <person name="Amanatides P.G."/>
            <person name="Scherer S.E."/>
            <person name="Li P.W."/>
            <person name="Hoskins R.A."/>
            <person name="Galle R.F."/>
            <person name="George R.A."/>
            <person name="Lewis S.E."/>
            <person name="Richards S."/>
            <person name="Ashburner M."/>
            <person name="Henderson S.N."/>
            <person name="Sutton G.G."/>
            <person name="Wortman J.R."/>
            <person name="Yandell M.D."/>
            <person name="Zhang Q."/>
            <person name="Chen L.X."/>
            <person name="Brandon R.C."/>
            <person name="Rogers Y.-H.C."/>
            <person name="Blazej R.G."/>
            <person name="Champe M."/>
            <person name="Pfeiffer B.D."/>
            <person name="Wan K.H."/>
            <person name="Doyle C."/>
            <person name="Baxter E.G."/>
            <person name="Helt G."/>
            <person name="Nelson C.R."/>
            <person name="Miklos G.L.G."/>
            <person name="Abril J.F."/>
            <person name="Agbayani A."/>
            <person name="An H.-J."/>
            <person name="Andrews-Pfannkoch C."/>
            <person name="Baldwin D."/>
            <person name="Ballew R.M."/>
            <person name="Basu A."/>
            <person name="Baxendale J."/>
            <person name="Bayraktaroglu L."/>
            <person name="Beasley E.M."/>
            <person name="Beeson K.Y."/>
            <person name="Benos P.V."/>
            <person name="Berman B.P."/>
            <person name="Bhandari D."/>
            <person name="Bolshakov S."/>
            <person name="Borkova D."/>
            <person name="Botchan M.R."/>
            <person name="Bouck J."/>
            <person name="Brokstein P."/>
            <person name="Brottier P."/>
            <person name="Burtis K.C."/>
            <person name="Busam D.A."/>
            <person name="Butler H."/>
            <person name="Cadieu E."/>
            <person name="Center A."/>
            <person name="Chandra I."/>
            <person name="Cherry J.M."/>
            <person name="Cawley S."/>
            <person name="Dahlke C."/>
            <person name="Davenport L.B."/>
            <person name="Davies P."/>
            <person name="de Pablos B."/>
            <person name="Delcher A."/>
            <person name="Deng Z."/>
            <person name="Mays A.D."/>
            <person name="Dew I."/>
            <person name="Dietz S.M."/>
            <person name="Dodson K."/>
            <person name="Doup L.E."/>
            <person name="Downes M."/>
            <person name="Dugan-Rocha S."/>
            <person name="Dunkov B.C."/>
            <person name="Dunn P."/>
            <person name="Durbin K.J."/>
            <person name="Evangelista C.C."/>
            <person name="Ferraz C."/>
            <person name="Ferriera S."/>
            <person name="Fleischmann W."/>
            <person name="Fosler C."/>
            <person name="Gabrielian A.E."/>
            <person name="Garg N.S."/>
            <person name="Gelbart W.M."/>
            <person name="Glasser K."/>
            <person name="Glodek A."/>
            <person name="Gong F."/>
            <person name="Gorrell J.H."/>
            <person name="Gu Z."/>
            <person name="Guan P."/>
            <person name="Harris M."/>
            <person name="Harris N.L."/>
            <person name="Harvey D.A."/>
            <person name="Heiman T.J."/>
            <person name="Hernandez J.R."/>
            <person name="Houck J."/>
            <person name="Hostin D."/>
            <person name="Houston K.A."/>
            <person name="Howland T.J."/>
            <person name="Wei M.-H."/>
            <person name="Ibegwam C."/>
            <person name="Jalali M."/>
            <person name="Kalush F."/>
            <person name="Karpen G.H."/>
            <person name="Ke Z."/>
            <person name="Kennison J.A."/>
            <person name="Ketchum K.A."/>
            <person name="Kimmel B.E."/>
            <person name="Kodira C.D."/>
            <person name="Kraft C.L."/>
            <person name="Kravitz S."/>
            <person name="Kulp D."/>
            <person name="Lai Z."/>
            <person name="Lasko P."/>
            <person name="Lei Y."/>
            <person name="Levitsky A.A."/>
            <person name="Li J.H."/>
            <person name="Li Z."/>
            <person name="Liang Y."/>
            <person name="Lin X."/>
            <person name="Liu X."/>
            <person name="Mattei B."/>
            <person name="McIntosh T.C."/>
            <person name="McLeod M.P."/>
            <person name="McPherson D."/>
            <person name="Merkulov G."/>
            <person name="Milshina N.V."/>
            <person name="Mobarry C."/>
            <person name="Morris J."/>
            <person name="Moshrefi A."/>
            <person name="Mount S.M."/>
            <person name="Moy M."/>
            <person name="Murphy B."/>
            <person name="Murphy L."/>
            <person name="Muzny D.M."/>
            <person name="Nelson D.L."/>
            <person name="Nelson D.R."/>
            <person name="Nelson K.A."/>
            <person name="Nixon K."/>
            <person name="Nusskern D.R."/>
            <person name="Pacleb J.M."/>
            <person name="Palazzolo M."/>
            <person name="Pittman G.S."/>
            <person name="Pan S."/>
            <person name="Pollard J."/>
            <person name="Puri V."/>
            <person name="Reese M.G."/>
            <person name="Reinert K."/>
            <person name="Remington K."/>
            <person name="Saunders R.D.C."/>
            <person name="Scheeler F."/>
            <person name="Shen H."/>
            <person name="Shue B.C."/>
            <person name="Siden-Kiamos I."/>
            <person name="Simpson M."/>
            <person name="Skupski M.P."/>
            <person name="Smith T.J."/>
            <person name="Spier E."/>
            <person name="Spradling A.C."/>
            <person name="Stapleton M."/>
            <person name="Strong R."/>
            <person name="Sun E."/>
            <person name="Svirskas R."/>
            <person name="Tector C."/>
            <person name="Turner R."/>
            <person name="Venter E."/>
            <person name="Wang A.H."/>
            <person name="Wang X."/>
            <person name="Wang Z.-Y."/>
            <person name="Wassarman D.A."/>
            <person name="Weinstock G.M."/>
            <person name="Weissenbach J."/>
            <person name="Williams S.M."/>
            <person name="Woodage T."/>
            <person name="Worley K.C."/>
            <person name="Wu D."/>
            <person name="Yang S."/>
            <person name="Yao Q.A."/>
            <person name="Ye J."/>
            <person name="Yeh R.-F."/>
            <person name="Zaveri J.S."/>
            <person name="Zhan M."/>
            <person name="Zhang G."/>
            <person name="Zhao Q."/>
            <person name="Zheng L."/>
            <person name="Zheng X.H."/>
            <person name="Zhong F.N."/>
            <person name="Zhong W."/>
            <person name="Zhou X."/>
            <person name="Zhu S.C."/>
            <person name="Zhu X."/>
            <person name="Smith H.O."/>
            <person name="Gibbs R.A."/>
            <person name="Myers E.W."/>
            <person name="Rubin G.M."/>
            <person name="Venter J.C."/>
        </authorList>
    </citation>
    <scope>NUCLEOTIDE SEQUENCE [LARGE SCALE GENOMIC DNA]</scope>
    <source>
        <strain>Berkeley</strain>
    </source>
</reference>
<reference key="3">
    <citation type="journal article" date="2002" name="Genome Biol.">
        <title>Annotation of the Drosophila melanogaster euchromatic genome: a systematic review.</title>
        <authorList>
            <person name="Misra S."/>
            <person name="Crosby M.A."/>
            <person name="Mungall C.J."/>
            <person name="Matthews B.B."/>
            <person name="Campbell K.S."/>
            <person name="Hradecky P."/>
            <person name="Huang Y."/>
            <person name="Kaminker J.S."/>
            <person name="Millburn G.H."/>
            <person name="Prochnik S.E."/>
            <person name="Smith C.D."/>
            <person name="Tupy J.L."/>
            <person name="Whitfield E.J."/>
            <person name="Bayraktaroglu L."/>
            <person name="Berman B.P."/>
            <person name="Bettencourt B.R."/>
            <person name="Celniker S.E."/>
            <person name="de Grey A.D.N.J."/>
            <person name="Drysdale R.A."/>
            <person name="Harris N.L."/>
            <person name="Richter J."/>
            <person name="Russo S."/>
            <person name="Schroeder A.J."/>
            <person name="Shu S.Q."/>
            <person name="Stapleton M."/>
            <person name="Yamada C."/>
            <person name="Ashburner M."/>
            <person name="Gelbart W.M."/>
            <person name="Rubin G.M."/>
            <person name="Lewis S.E."/>
        </authorList>
    </citation>
    <scope>GENOME REANNOTATION</scope>
    <scope>ALTERNATIVE SPLICING</scope>
    <source>
        <strain>Berkeley</strain>
    </source>
</reference>
<reference key="4">
    <citation type="submission" date="2003-02" db="EMBL/GenBank/DDBJ databases">
        <authorList>
            <person name="Stapleton M."/>
            <person name="Brokstein P."/>
            <person name="Hong L."/>
            <person name="Agbayani A."/>
            <person name="Carlson J."/>
            <person name="Champe M."/>
            <person name="Chavez C."/>
            <person name="Dorsett V."/>
            <person name="Dresnek D."/>
            <person name="Farfan D."/>
            <person name="Frise E."/>
            <person name="George R."/>
            <person name="Gonzalez M."/>
            <person name="Guarin H."/>
            <person name="Kronmiller B."/>
            <person name="Li P."/>
            <person name="Liao G."/>
            <person name="Miranda A."/>
            <person name="Mungall C.J."/>
            <person name="Nunoo J."/>
            <person name="Pacleb J."/>
            <person name="Paragas V."/>
            <person name="Park S."/>
            <person name="Patel S."/>
            <person name="Phouanenavong S."/>
            <person name="Wan K."/>
            <person name="Yu C."/>
            <person name="Lewis S.E."/>
            <person name="Rubin G.M."/>
            <person name="Celniker S."/>
        </authorList>
    </citation>
    <scope>NUCLEOTIDE SEQUENCE [LARGE SCALE MRNA] (ISOFORMS A AND B)</scope>
    <source>
        <strain>Berkeley</strain>
        <tissue>Embryo</tissue>
        <tissue>Head</tissue>
    </source>
</reference>
<reference key="5">
    <citation type="submission" date="2009-06" db="EMBL/GenBank/DDBJ databases">
        <authorList>
            <person name="Carlson J."/>
            <person name="Booth B."/>
            <person name="Frise E."/>
            <person name="Park S."/>
            <person name="Wan K."/>
            <person name="Yu C."/>
            <person name="Celniker S."/>
        </authorList>
    </citation>
    <scope>NUCLEOTIDE SEQUENCE [LARGE SCALE MRNA] (ISOFORM B)</scope>
    <source>
        <strain>Berkeley</strain>
    </source>
</reference>
<reference key="6">
    <citation type="journal article" date="2009" name="Cell Metab.">
        <title>Drosophila HNF4 regulates lipid mobilization and beta-oxidation.</title>
        <authorList>
            <person name="Palanker L."/>
            <person name="Tennessen J.M."/>
            <person name="Lam G."/>
            <person name="Thummel C.S."/>
        </authorList>
    </citation>
    <scope>FUNCTION</scope>
    <scope>SUBCELLULAR LOCATION</scope>
    <scope>TISSUE SPECIFICITY</scope>
    <scope>DISRUPTION PHENOTYPE</scope>
</reference>
<feature type="chain" id="PRO_0000053565" description="Transcription factor HNF-4 homolog">
    <location>
        <begin position="1"/>
        <end position="704"/>
    </location>
</feature>
<feature type="domain" description="NR LBD" evidence="2">
    <location>
        <begin position="232"/>
        <end position="470"/>
    </location>
</feature>
<feature type="DNA-binding region" description="Nuclear receptor" evidence="1">
    <location>
        <begin position="139"/>
        <end position="214"/>
    </location>
</feature>
<feature type="zinc finger region" description="NR C4-type" evidence="1">
    <location>
        <begin position="142"/>
        <end position="162"/>
    </location>
</feature>
<feature type="zinc finger region" description="NR C4-type" evidence="1">
    <location>
        <begin position="178"/>
        <end position="197"/>
    </location>
</feature>
<feature type="region of interest" description="Disordered" evidence="3">
    <location>
        <begin position="93"/>
        <end position="133"/>
    </location>
</feature>
<feature type="region of interest" description="Disordered" evidence="3">
    <location>
        <begin position="474"/>
        <end position="520"/>
    </location>
</feature>
<feature type="region of interest" description="Disordered" evidence="3">
    <location>
        <begin position="563"/>
        <end position="624"/>
    </location>
</feature>
<feature type="region of interest" description="Disordered" evidence="3">
    <location>
        <begin position="684"/>
        <end position="704"/>
    </location>
</feature>
<feature type="compositionally biased region" description="Low complexity" evidence="3">
    <location>
        <begin position="100"/>
        <end position="133"/>
    </location>
</feature>
<feature type="compositionally biased region" description="Polar residues" evidence="3">
    <location>
        <begin position="487"/>
        <end position="512"/>
    </location>
</feature>
<feature type="compositionally biased region" description="Low complexity" evidence="3">
    <location>
        <begin position="563"/>
        <end position="574"/>
    </location>
</feature>
<feature type="compositionally biased region" description="Polar residues" evidence="3">
    <location>
        <begin position="608"/>
        <end position="620"/>
    </location>
</feature>
<feature type="splice variant" id="VSP_054578" description="In isoform B." evidence="6 7">
    <original>MMKHPQDLSVTDDQQLMKVNKVEKMEQELHDP</original>
    <variation>MVRKSGRVKISSRDRVAVGNILLRGKVGGGRVAVAAAEEAEAGRRRRRRDSSASRTASSD</variation>
    <location>
        <begin position="1"/>
        <end position="32"/>
    </location>
</feature>
<feature type="splice variant" id="VSP_054577" description="In isoform D." evidence="8">
    <original>MMKHPQDLSVTDDQQLMKVNKVEKMEQELHDP</original>
    <variation>MYASMLPSLLNMKTENLTSSSYDDAFLLEENLLHIM</variation>
    <location>
        <begin position="1"/>
        <end position="32"/>
    </location>
</feature>
<feature type="sequence conflict" description="In Ref. 1; AAB09592." evidence="8" ref="1">
    <original>N</original>
    <variation>Y</variation>
    <location>
        <position position="113"/>
    </location>
</feature>
<feature type="sequence conflict" description="In Ref. 1; AAB09592." evidence="8" ref="1">
    <original>S</original>
    <variation>N</variation>
    <location>
        <position position="117"/>
    </location>
</feature>
<feature type="sequence conflict" description="In Ref. 4; AAN71555." evidence="8" ref="4">
    <original>C</original>
    <variation>F</variation>
    <location>
        <position position="159"/>
    </location>
</feature>
<name>HNF4_DROME</name>
<dbReference type="EMBL" id="U70874">
    <property type="protein sequence ID" value="AAB09592.1"/>
    <property type="status" value="ALT_INIT"/>
    <property type="molecule type" value="mRNA"/>
</dbReference>
<dbReference type="EMBL" id="AE014134">
    <property type="protein sequence ID" value="AAF52702.2"/>
    <property type="molecule type" value="Genomic_DNA"/>
</dbReference>
<dbReference type="EMBL" id="AE014134">
    <property type="protein sequence ID" value="AAF52703.2"/>
    <property type="molecule type" value="Genomic_DNA"/>
</dbReference>
<dbReference type="EMBL" id="AE014134">
    <property type="protein sequence ID" value="AAN10680.1"/>
    <property type="molecule type" value="Genomic_DNA"/>
</dbReference>
<dbReference type="EMBL" id="AE014134">
    <property type="protein sequence ID" value="ABV53653.1"/>
    <property type="molecule type" value="Genomic_DNA"/>
</dbReference>
<dbReference type="EMBL" id="BT001800">
    <property type="protein sequence ID" value="AAN71555.1"/>
    <property type="status" value="ALT_INIT"/>
    <property type="molecule type" value="mRNA"/>
</dbReference>
<dbReference type="EMBL" id="BT003533">
    <property type="protein sequence ID" value="AAO39537.1"/>
    <property type="molecule type" value="mRNA"/>
</dbReference>
<dbReference type="EMBL" id="BT088848">
    <property type="protein sequence ID" value="ACS68165.1"/>
    <property type="status" value="ALT_INIT"/>
    <property type="molecule type" value="mRNA"/>
</dbReference>
<dbReference type="PIR" id="S36218">
    <property type="entry name" value="S36218"/>
</dbReference>
<dbReference type="RefSeq" id="NP_001097126.1">
    <molecule id="P49866-2"/>
    <property type="nucleotide sequence ID" value="NM_001103656.3"/>
</dbReference>
<dbReference type="RefSeq" id="NP_476887.2">
    <molecule id="P49866-1"/>
    <property type="nucleotide sequence ID" value="NM_057539.5"/>
</dbReference>
<dbReference type="RefSeq" id="NP_723413.1">
    <molecule id="P49866-3"/>
    <property type="nucleotide sequence ID" value="NM_164833.2"/>
</dbReference>
<dbReference type="RefSeq" id="NP_723414.2">
    <molecule id="P49866-1"/>
    <property type="nucleotide sequence ID" value="NM_164834.2"/>
</dbReference>
<dbReference type="SMR" id="P49866"/>
<dbReference type="BioGRID" id="69122">
    <property type="interactions" value="12"/>
</dbReference>
<dbReference type="DIP" id="DIP-19209N"/>
<dbReference type="FunCoup" id="P49866">
    <property type="interactions" value="566"/>
</dbReference>
<dbReference type="IntAct" id="P49866">
    <property type="interactions" value="4"/>
</dbReference>
<dbReference type="STRING" id="7227.FBpp0079350"/>
<dbReference type="PaxDb" id="7227-FBpp0079350"/>
<dbReference type="DNASU" id="44544"/>
<dbReference type="EnsemblMetazoa" id="FBtr0079747">
    <molecule id="P49866-1"/>
    <property type="protein sequence ID" value="FBpp0079349"/>
    <property type="gene ID" value="FBgn0004914"/>
</dbReference>
<dbReference type="EnsemblMetazoa" id="FBtr0079748">
    <molecule id="P49866-3"/>
    <property type="protein sequence ID" value="FBpp0079350"/>
    <property type="gene ID" value="FBgn0004914"/>
</dbReference>
<dbReference type="EnsemblMetazoa" id="FBtr0112846">
    <molecule id="P49866-2"/>
    <property type="protein sequence ID" value="FBpp0111759"/>
    <property type="gene ID" value="FBgn0004914"/>
</dbReference>
<dbReference type="EnsemblMetazoa" id="FBtr0336633">
    <molecule id="P49866-1"/>
    <property type="protein sequence ID" value="FBpp0307616"/>
    <property type="gene ID" value="FBgn0004914"/>
</dbReference>
<dbReference type="GeneID" id="44544"/>
<dbReference type="KEGG" id="dme:Dmel_CG9310"/>
<dbReference type="UCSC" id="CG9310-RA">
    <property type="organism name" value="d. melanogaster"/>
</dbReference>
<dbReference type="UCSC" id="CG9310-RB">
    <property type="organism name" value="d. melanogaster"/>
</dbReference>
<dbReference type="UCSC" id="CG9310-RD">
    <property type="organism name" value="d. melanogaster"/>
</dbReference>
<dbReference type="AGR" id="FB:FBgn0004914"/>
<dbReference type="CTD" id="44544"/>
<dbReference type="FlyBase" id="FBgn0004914">
    <property type="gene designation" value="Hnf4"/>
</dbReference>
<dbReference type="VEuPathDB" id="VectorBase:FBgn0004914"/>
<dbReference type="eggNOG" id="KOG4215">
    <property type="taxonomic scope" value="Eukaryota"/>
</dbReference>
<dbReference type="GeneTree" id="ENSGT00940000167734"/>
<dbReference type="InParanoid" id="P49866"/>
<dbReference type="OMA" id="DGQQLMK"/>
<dbReference type="OrthoDB" id="8183030at2759"/>
<dbReference type="Reactome" id="R-DME-383280">
    <property type="pathway name" value="Nuclear Receptor transcription pathway"/>
</dbReference>
<dbReference type="SignaLink" id="P49866"/>
<dbReference type="BioGRID-ORCS" id="44544">
    <property type="hits" value="0 hits in 3 CRISPR screens"/>
</dbReference>
<dbReference type="GenomeRNAi" id="44544"/>
<dbReference type="PRO" id="PR:P49866"/>
<dbReference type="Proteomes" id="UP000000803">
    <property type="component" value="Chromosome 2L"/>
</dbReference>
<dbReference type="Bgee" id="FBgn0004914">
    <property type="expression patterns" value="Expressed in fat body cell in haltere and 224 other cell types or tissues"/>
</dbReference>
<dbReference type="ExpressionAtlas" id="P49866">
    <property type="expression patterns" value="baseline and differential"/>
</dbReference>
<dbReference type="GO" id="GO:0005634">
    <property type="term" value="C:nucleus"/>
    <property type="evidence" value="ECO:0000314"/>
    <property type="project" value="FlyBase"/>
</dbReference>
<dbReference type="GO" id="GO:0004879">
    <property type="term" value="F:nuclear receptor activity"/>
    <property type="evidence" value="ECO:0000318"/>
    <property type="project" value="GO_Central"/>
</dbReference>
<dbReference type="GO" id="GO:0003707">
    <property type="term" value="F:nuclear steroid receptor activity"/>
    <property type="evidence" value="ECO:0007669"/>
    <property type="project" value="InterPro"/>
</dbReference>
<dbReference type="GO" id="GO:0000978">
    <property type="term" value="F:RNA polymerase II cis-regulatory region sequence-specific DNA binding"/>
    <property type="evidence" value="ECO:0000318"/>
    <property type="project" value="GO_Central"/>
</dbReference>
<dbReference type="GO" id="GO:0008270">
    <property type="term" value="F:zinc ion binding"/>
    <property type="evidence" value="ECO:0007669"/>
    <property type="project" value="UniProtKB-KW"/>
</dbReference>
<dbReference type="GO" id="GO:0030154">
    <property type="term" value="P:cell differentiation"/>
    <property type="evidence" value="ECO:0000318"/>
    <property type="project" value="GO_Central"/>
</dbReference>
<dbReference type="GO" id="GO:0032869">
    <property type="term" value="P:cellular response to insulin stimulus"/>
    <property type="evidence" value="ECO:0000315"/>
    <property type="project" value="FlyBase"/>
</dbReference>
<dbReference type="GO" id="GO:0042593">
    <property type="term" value="P:glucose homeostasis"/>
    <property type="evidence" value="ECO:0000315"/>
    <property type="project" value="FlyBase"/>
</dbReference>
<dbReference type="GO" id="GO:0016042">
    <property type="term" value="P:lipid catabolic process"/>
    <property type="evidence" value="ECO:0000314"/>
    <property type="project" value="FlyBase"/>
</dbReference>
<dbReference type="GO" id="GO:0034440">
    <property type="term" value="P:lipid oxidation"/>
    <property type="evidence" value="ECO:0000314"/>
    <property type="project" value="FlyBase"/>
</dbReference>
<dbReference type="GO" id="GO:0006357">
    <property type="term" value="P:regulation of transcription by RNA polymerase II"/>
    <property type="evidence" value="ECO:0000250"/>
    <property type="project" value="FlyBase"/>
</dbReference>
<dbReference type="CDD" id="cd06960">
    <property type="entry name" value="NR_DBD_HNF4A"/>
    <property type="match status" value="1"/>
</dbReference>
<dbReference type="CDD" id="cd06931">
    <property type="entry name" value="NR_LBD_HNF4_like"/>
    <property type="match status" value="1"/>
</dbReference>
<dbReference type="FunFam" id="1.10.565.10:FF:000026">
    <property type="entry name" value="Hepatocyte nuclear factor 4"/>
    <property type="match status" value="1"/>
</dbReference>
<dbReference type="FunFam" id="3.30.50.10:FF:000012">
    <property type="entry name" value="Hepatocyte nuclear factor 4, alpha"/>
    <property type="match status" value="1"/>
</dbReference>
<dbReference type="Gene3D" id="3.30.50.10">
    <property type="entry name" value="Erythroid Transcription Factor GATA-1, subunit A"/>
    <property type="match status" value="1"/>
</dbReference>
<dbReference type="Gene3D" id="1.10.565.10">
    <property type="entry name" value="Retinoid X Receptor"/>
    <property type="match status" value="1"/>
</dbReference>
<dbReference type="InterPro" id="IPR049636">
    <property type="entry name" value="HNF4-like_DBD"/>
</dbReference>
<dbReference type="InterPro" id="IPR049635">
    <property type="entry name" value="HNF4_LBD"/>
</dbReference>
<dbReference type="InterPro" id="IPR035500">
    <property type="entry name" value="NHR-like_dom_sf"/>
</dbReference>
<dbReference type="InterPro" id="IPR000536">
    <property type="entry name" value="Nucl_hrmn_rcpt_lig-bd"/>
</dbReference>
<dbReference type="InterPro" id="IPR050274">
    <property type="entry name" value="Nuclear_hormone_rcpt_NR2"/>
</dbReference>
<dbReference type="InterPro" id="IPR001723">
    <property type="entry name" value="Nuclear_hrmn_rcpt"/>
</dbReference>
<dbReference type="InterPro" id="IPR000003">
    <property type="entry name" value="Retinoid-X_rcpt/HNF4"/>
</dbReference>
<dbReference type="InterPro" id="IPR001628">
    <property type="entry name" value="Znf_hrmn_rcpt"/>
</dbReference>
<dbReference type="InterPro" id="IPR013088">
    <property type="entry name" value="Znf_NHR/GATA"/>
</dbReference>
<dbReference type="PANTHER" id="PTHR24083">
    <property type="entry name" value="NUCLEAR HORMONE RECEPTOR"/>
    <property type="match status" value="1"/>
</dbReference>
<dbReference type="Pfam" id="PF00104">
    <property type="entry name" value="Hormone_recep"/>
    <property type="match status" value="1"/>
</dbReference>
<dbReference type="Pfam" id="PF00105">
    <property type="entry name" value="zf-C4"/>
    <property type="match status" value="1"/>
</dbReference>
<dbReference type="PRINTS" id="PR00545">
    <property type="entry name" value="RETINOIDXR"/>
</dbReference>
<dbReference type="PRINTS" id="PR00398">
    <property type="entry name" value="STRDHORMONER"/>
</dbReference>
<dbReference type="PRINTS" id="PR00047">
    <property type="entry name" value="STROIDFINGER"/>
</dbReference>
<dbReference type="SMART" id="SM00430">
    <property type="entry name" value="HOLI"/>
    <property type="match status" value="1"/>
</dbReference>
<dbReference type="SMART" id="SM00399">
    <property type="entry name" value="ZnF_C4"/>
    <property type="match status" value="1"/>
</dbReference>
<dbReference type="SUPFAM" id="SSF57716">
    <property type="entry name" value="Glucocorticoid receptor-like (DNA-binding domain)"/>
    <property type="match status" value="1"/>
</dbReference>
<dbReference type="SUPFAM" id="SSF48508">
    <property type="entry name" value="Nuclear receptor ligand-binding domain"/>
    <property type="match status" value="1"/>
</dbReference>
<dbReference type="PROSITE" id="PS51843">
    <property type="entry name" value="NR_LBD"/>
    <property type="match status" value="1"/>
</dbReference>
<dbReference type="PROSITE" id="PS00031">
    <property type="entry name" value="NUCLEAR_REC_DBD_1"/>
    <property type="match status" value="1"/>
</dbReference>
<dbReference type="PROSITE" id="PS51030">
    <property type="entry name" value="NUCLEAR_REC_DBD_2"/>
    <property type="match status" value="1"/>
</dbReference>
<protein>
    <recommendedName>
        <fullName>Transcription factor HNF-4 homolog</fullName>
        <shortName>dHNF4</shortName>
    </recommendedName>
    <alternativeName>
        <fullName>Nuclear receptor subfamily 2 group A member 4</fullName>
    </alternativeName>
</protein>
<accession>P49866</accession>
<accession>A8DYX8</accession>
<accession>C5WLN3</accession>
<accession>Q8IGG2</accession>
<accession>Q8IPF2</accession>
<accession>Q9VLI7</accession>
<accession>Q9VLI8</accession>
<evidence type="ECO:0000255" key="1">
    <source>
        <dbReference type="PROSITE-ProRule" id="PRU00407"/>
    </source>
</evidence>
<evidence type="ECO:0000255" key="2">
    <source>
        <dbReference type="PROSITE-ProRule" id="PRU01189"/>
    </source>
</evidence>
<evidence type="ECO:0000256" key="3">
    <source>
        <dbReference type="SAM" id="MobiDB-lite"/>
    </source>
</evidence>
<evidence type="ECO:0000269" key="4">
    <source>
    </source>
</evidence>
<evidence type="ECO:0000269" key="5">
    <source>
    </source>
</evidence>
<evidence type="ECO:0000303" key="6">
    <source ref="4"/>
</evidence>
<evidence type="ECO:0000303" key="7">
    <source ref="5"/>
</evidence>
<evidence type="ECO:0000305" key="8"/>
<keyword id="KW-0025">Alternative splicing</keyword>
<keyword id="KW-0238">DNA-binding</keyword>
<keyword id="KW-0442">Lipid degradation</keyword>
<keyword id="KW-0443">Lipid metabolism</keyword>
<keyword id="KW-0479">Metal-binding</keyword>
<keyword id="KW-0539">Nucleus</keyword>
<keyword id="KW-0675">Receptor</keyword>
<keyword id="KW-1185">Reference proteome</keyword>
<keyword id="KW-0804">Transcription</keyword>
<keyword id="KW-0805">Transcription regulation</keyword>
<keyword id="KW-0862">Zinc</keyword>
<keyword id="KW-0863">Zinc-finger</keyword>
<gene>
    <name type="primary">Hnf4</name>
    <name type="synonym">NR2A4</name>
    <name type="ORF">CG9310</name>
</gene>